<keyword id="KW-0997">Cell inner membrane</keyword>
<keyword id="KW-1003">Cell membrane</keyword>
<keyword id="KW-0342">GTP-binding</keyword>
<keyword id="KW-0406">Ion transport</keyword>
<keyword id="KW-0408">Iron</keyword>
<keyword id="KW-0410">Iron transport</keyword>
<keyword id="KW-0472">Membrane</keyword>
<keyword id="KW-0547">Nucleotide-binding</keyword>
<keyword id="KW-0812">Transmembrane</keyword>
<keyword id="KW-1133">Transmembrane helix</keyword>
<keyword id="KW-0813">Transport</keyword>
<protein>
    <recommendedName>
        <fullName evidence="5">Fe(2+) transporter FeoB</fullName>
    </recommendedName>
    <alternativeName>
        <fullName>Ferrous iron transport protein B</fullName>
    </alternativeName>
</protein>
<comment type="function">
    <text evidence="2">Probable transporter of a GTP-driven Fe(2+) uptake system.</text>
</comment>
<comment type="subcellular location">
    <subcellularLocation>
        <location evidence="1">Cell inner membrane</location>
        <topology evidence="1">Multi-pass membrane protein</topology>
    </subcellularLocation>
</comment>
<comment type="similarity">
    <text evidence="4">Belongs to the TRAFAC class TrmE-Era-EngA-EngB-Septin-like GTPase superfamily. FeoB GTPase (TC 9.A.8) family.</text>
</comment>
<dbReference type="EMBL" id="CR628336">
    <property type="protein sequence ID" value="CAH13864.1"/>
    <property type="molecule type" value="Genomic_DNA"/>
</dbReference>
<dbReference type="RefSeq" id="WP_015961734.1">
    <property type="nucleotide sequence ID" value="NC_006368.1"/>
</dbReference>
<dbReference type="SMR" id="Q5X1N2"/>
<dbReference type="TCDB" id="9.A.8.1.12">
    <property type="family name" value="the ferrous iron uptake (feob) family"/>
</dbReference>
<dbReference type="KEGG" id="lpp:lpp2711"/>
<dbReference type="LegioList" id="lpp2711"/>
<dbReference type="HOGENOM" id="CLU_013350_3_0_6"/>
<dbReference type="GO" id="GO:0005886">
    <property type="term" value="C:plasma membrane"/>
    <property type="evidence" value="ECO:0007669"/>
    <property type="project" value="UniProtKB-SubCell"/>
</dbReference>
<dbReference type="GO" id="GO:0015093">
    <property type="term" value="F:ferrous iron transmembrane transporter activity"/>
    <property type="evidence" value="ECO:0007669"/>
    <property type="project" value="InterPro"/>
</dbReference>
<dbReference type="GO" id="GO:0005525">
    <property type="term" value="F:GTP binding"/>
    <property type="evidence" value="ECO:0007669"/>
    <property type="project" value="UniProtKB-KW"/>
</dbReference>
<dbReference type="CDD" id="cd01879">
    <property type="entry name" value="FeoB"/>
    <property type="match status" value="1"/>
</dbReference>
<dbReference type="FunFam" id="3.40.50.300:FF:000426">
    <property type="entry name" value="Ferrous iron transport protein B"/>
    <property type="match status" value="1"/>
</dbReference>
<dbReference type="Gene3D" id="1.10.287.1770">
    <property type="match status" value="1"/>
</dbReference>
<dbReference type="Gene3D" id="3.40.50.300">
    <property type="entry name" value="P-loop containing nucleotide triphosphate hydrolases"/>
    <property type="match status" value="1"/>
</dbReference>
<dbReference type="InterPro" id="IPR003373">
    <property type="entry name" value="Fe2_transport_prot-B"/>
</dbReference>
<dbReference type="InterPro" id="IPR011640">
    <property type="entry name" value="Fe2_transport_prot_B_C"/>
</dbReference>
<dbReference type="InterPro" id="IPR050860">
    <property type="entry name" value="FeoB_GTPase"/>
</dbReference>
<dbReference type="InterPro" id="IPR030389">
    <property type="entry name" value="G_FEOB_dom"/>
</dbReference>
<dbReference type="InterPro" id="IPR011642">
    <property type="entry name" value="Gate_dom"/>
</dbReference>
<dbReference type="InterPro" id="IPR006073">
    <property type="entry name" value="GTP-bd"/>
</dbReference>
<dbReference type="InterPro" id="IPR027417">
    <property type="entry name" value="P-loop_NTPase"/>
</dbReference>
<dbReference type="NCBIfam" id="TIGR00437">
    <property type="entry name" value="feoB"/>
    <property type="match status" value="1"/>
</dbReference>
<dbReference type="NCBIfam" id="NF007105">
    <property type="entry name" value="PRK09554.1"/>
    <property type="match status" value="1"/>
</dbReference>
<dbReference type="PANTHER" id="PTHR43185:SF1">
    <property type="entry name" value="FE(2+) TRANSPORTER FEOB"/>
    <property type="match status" value="1"/>
</dbReference>
<dbReference type="PANTHER" id="PTHR43185">
    <property type="entry name" value="FERROUS IRON TRANSPORT PROTEIN B"/>
    <property type="match status" value="1"/>
</dbReference>
<dbReference type="Pfam" id="PF07664">
    <property type="entry name" value="FeoB_C"/>
    <property type="match status" value="1"/>
</dbReference>
<dbReference type="Pfam" id="PF02421">
    <property type="entry name" value="FeoB_N"/>
    <property type="match status" value="1"/>
</dbReference>
<dbReference type="Pfam" id="PF07670">
    <property type="entry name" value="Gate"/>
    <property type="match status" value="2"/>
</dbReference>
<dbReference type="PRINTS" id="PR00326">
    <property type="entry name" value="GTP1OBG"/>
</dbReference>
<dbReference type="SUPFAM" id="SSF52540">
    <property type="entry name" value="P-loop containing nucleoside triphosphate hydrolases"/>
    <property type="match status" value="1"/>
</dbReference>
<dbReference type="PROSITE" id="PS51711">
    <property type="entry name" value="G_FEOB"/>
    <property type="match status" value="1"/>
</dbReference>
<organism>
    <name type="scientific">Legionella pneumophila (strain Paris)</name>
    <dbReference type="NCBI Taxonomy" id="297246"/>
    <lineage>
        <taxon>Bacteria</taxon>
        <taxon>Pseudomonadati</taxon>
        <taxon>Pseudomonadota</taxon>
        <taxon>Gammaproteobacteria</taxon>
        <taxon>Legionellales</taxon>
        <taxon>Legionellaceae</taxon>
        <taxon>Legionella</taxon>
    </lineage>
</organism>
<reference key="1">
    <citation type="journal article" date="2004" name="Nat. Genet.">
        <title>Evidence in the Legionella pneumophila genome for exploitation of host cell functions and high genome plasticity.</title>
        <authorList>
            <person name="Cazalet C."/>
            <person name="Rusniok C."/>
            <person name="Brueggemann H."/>
            <person name="Zidane N."/>
            <person name="Magnier A."/>
            <person name="Ma L."/>
            <person name="Tichit M."/>
            <person name="Jarraud S."/>
            <person name="Bouchier C."/>
            <person name="Vandenesch F."/>
            <person name="Kunst F."/>
            <person name="Etienne J."/>
            <person name="Glaser P."/>
            <person name="Buchrieser C."/>
        </authorList>
    </citation>
    <scope>NUCLEOTIDE SEQUENCE [LARGE SCALE GENOMIC DNA]</scope>
    <source>
        <strain>Paris</strain>
    </source>
</reference>
<accession>Q5X1N2</accession>
<gene>
    <name type="primary">feoB</name>
    <name type="ordered locus">lpp2711</name>
</gene>
<sequence>MTHALLIGNPNCGKTTLFNALTNANQRVGNWPGVTVEKKTGEFLLGEHLIEITDLPGVYSLVANAEGISQDEQIAAQSVIDLEYDCIINVIDACHLERHLYLTSQLFELGKPVVVALNMMDIAEHRGISIDTEKLESLLGCSVIPIQAHKNIGIPALQQSLLHCSQKIKPLKLSLSVAAQQILNDLENQLISKGYKNSFAYYFSRRLAEGDTLIGEKAFTESLLIKLQETEQNLDVLLADARYQKIHEIVTLVQKKHSDASEHFTAKLDKLVLHRFLALPIFFAMMYLMFLFAINIGGAFQDFFDISTETIFVQGSGWLLQQLHAPNWVIALVANGVGKGINTTITFIPVIAAMFFFLSLLETSGYMARAAFVVDKAMRAMGLPGKSFVPMIVGFGCNVPAIMAARTLDSERDRLLTVMMSPFMSCSARLAIYAVFVAAFFPSGGHNVVFSLYLIGILMAVFTGYILRKTTLKGHASPLILELPAYHRPSLRRLLRETSLRLRFFVYRAGKLIIPICVILGGLNAITWGGGISSGEANTDSLLSIIGQWITPLFAPMGIHQDNWPATVGLLTGMLAKEVVVGTLNSLYAQVGHVGEIAAAHFDFWGGIKAAFGSIPANLSELGSALWNPVSASAADSELSQSVYGIMSRRFDGAVGAYAYLLFVLLYIPCVSTMAVIRQEANKRFMWTSIVWSFVVAYTTSVVFYQGAKFLDHPQQSMIWILAMSLSLLFVLAVFRYSQYGMGRQNAAANT</sequence>
<name>FEOB_LEGPA</name>
<feature type="chain" id="PRO_0000210833" description="Fe(2+) transporter FeoB">
    <location>
        <begin position="1"/>
        <end position="751"/>
    </location>
</feature>
<feature type="transmembrane region" description="Helical" evidence="3">
    <location>
        <begin position="276"/>
        <end position="296"/>
    </location>
</feature>
<feature type="transmembrane region" description="Helical" evidence="3">
    <location>
        <begin position="341"/>
        <end position="361"/>
    </location>
</feature>
<feature type="transmembrane region" description="Helical" evidence="3">
    <location>
        <begin position="385"/>
        <end position="405"/>
    </location>
</feature>
<feature type="transmembrane region" description="Helical" evidence="3">
    <location>
        <begin position="422"/>
        <end position="442"/>
    </location>
</feature>
<feature type="transmembrane region" description="Helical" evidence="3">
    <location>
        <begin position="447"/>
        <end position="467"/>
    </location>
</feature>
<feature type="transmembrane region" description="Helical" evidence="3">
    <location>
        <begin position="512"/>
        <end position="532"/>
    </location>
</feature>
<feature type="transmembrane region" description="Helical" evidence="3">
    <location>
        <begin position="539"/>
        <end position="559"/>
    </location>
</feature>
<feature type="transmembrane region" description="Helical" evidence="3">
    <location>
        <begin position="657"/>
        <end position="677"/>
    </location>
</feature>
<feature type="transmembrane region" description="Helical" evidence="3">
    <location>
        <begin position="685"/>
        <end position="705"/>
    </location>
</feature>
<feature type="transmembrane region" description="Helical" evidence="3">
    <location>
        <begin position="715"/>
        <end position="735"/>
    </location>
</feature>
<feature type="domain" description="FeoB-type G" evidence="4">
    <location>
        <begin position="1"/>
        <end position="167"/>
    </location>
</feature>
<feature type="binding site" evidence="4">
    <location>
        <begin position="8"/>
        <end position="15"/>
    </location>
    <ligand>
        <name>GTP</name>
        <dbReference type="ChEBI" id="CHEBI:37565"/>
        <label>1</label>
    </ligand>
</feature>
<feature type="binding site" evidence="4">
    <location>
        <begin position="33"/>
        <end position="37"/>
    </location>
    <ligand>
        <name>GTP</name>
        <dbReference type="ChEBI" id="CHEBI:37565"/>
        <label>2</label>
    </ligand>
</feature>
<feature type="binding site" evidence="4">
    <location>
        <begin position="54"/>
        <end position="57"/>
    </location>
    <ligand>
        <name>GTP</name>
        <dbReference type="ChEBI" id="CHEBI:37565"/>
        <label>3</label>
    </ligand>
</feature>
<feature type="binding site" evidence="4">
    <location>
        <begin position="118"/>
        <end position="121"/>
    </location>
    <ligand>
        <name>GTP</name>
        <dbReference type="ChEBI" id="CHEBI:37565"/>
    </ligand>
</feature>
<feature type="binding site" evidence="4">
    <location>
        <begin position="147"/>
        <end position="149"/>
    </location>
    <ligand>
        <name>GTP</name>
        <dbReference type="ChEBI" id="CHEBI:37565"/>
    </ligand>
</feature>
<proteinExistence type="inferred from homology"/>
<evidence type="ECO:0000250" key="1">
    <source>
        <dbReference type="UniProtKB" id="P33650"/>
    </source>
</evidence>
<evidence type="ECO:0000250" key="2">
    <source>
        <dbReference type="UniProtKB" id="Q8GNS3"/>
    </source>
</evidence>
<evidence type="ECO:0000255" key="3"/>
<evidence type="ECO:0000255" key="4">
    <source>
        <dbReference type="PROSITE-ProRule" id="PRU01048"/>
    </source>
</evidence>
<evidence type="ECO:0000305" key="5"/>